<dbReference type="EC" id="7.1.1.-" evidence="1"/>
<dbReference type="EMBL" id="AE017223">
    <property type="protein sequence ID" value="AAX74186.1"/>
    <property type="molecule type" value="Genomic_DNA"/>
</dbReference>
<dbReference type="RefSeq" id="WP_002966770.1">
    <property type="nucleotide sequence ID" value="NC_006932.1"/>
</dbReference>
<dbReference type="SMR" id="Q57DU8"/>
<dbReference type="EnsemblBacteria" id="AAX74186">
    <property type="protein sequence ID" value="AAX74186"/>
    <property type="gene ID" value="BruAb1_0819"/>
</dbReference>
<dbReference type="KEGG" id="bmb:BruAb1_0819"/>
<dbReference type="HOGENOM" id="CLU_015134_1_1_5"/>
<dbReference type="Proteomes" id="UP000000540">
    <property type="component" value="Chromosome I"/>
</dbReference>
<dbReference type="GO" id="GO:0005886">
    <property type="term" value="C:plasma membrane"/>
    <property type="evidence" value="ECO:0007669"/>
    <property type="project" value="UniProtKB-SubCell"/>
</dbReference>
<dbReference type="GO" id="GO:0051287">
    <property type="term" value="F:NAD binding"/>
    <property type="evidence" value="ECO:0007669"/>
    <property type="project" value="InterPro"/>
</dbReference>
<dbReference type="GO" id="GO:0050136">
    <property type="term" value="F:NADH:ubiquinone reductase (non-electrogenic) activity"/>
    <property type="evidence" value="ECO:0007669"/>
    <property type="project" value="UniProtKB-UniRule"/>
</dbReference>
<dbReference type="GO" id="GO:0048038">
    <property type="term" value="F:quinone binding"/>
    <property type="evidence" value="ECO:0007669"/>
    <property type="project" value="UniProtKB-KW"/>
</dbReference>
<dbReference type="FunFam" id="1.10.645.10:FF:000005">
    <property type="entry name" value="NADH-quinone oxidoreductase subunit D"/>
    <property type="match status" value="1"/>
</dbReference>
<dbReference type="Gene3D" id="1.10.645.10">
    <property type="entry name" value="Cytochrome-c3 Hydrogenase, chain B"/>
    <property type="match status" value="1"/>
</dbReference>
<dbReference type="HAMAP" id="MF_01358">
    <property type="entry name" value="NDH1_NuoD"/>
    <property type="match status" value="1"/>
</dbReference>
<dbReference type="InterPro" id="IPR001135">
    <property type="entry name" value="NADH_Q_OxRdtase_suD"/>
</dbReference>
<dbReference type="InterPro" id="IPR014029">
    <property type="entry name" value="NADH_UbQ_OxRdtase_49kDa_CS"/>
</dbReference>
<dbReference type="InterPro" id="IPR022885">
    <property type="entry name" value="NDH1_su_D/H"/>
</dbReference>
<dbReference type="InterPro" id="IPR029014">
    <property type="entry name" value="NiFe-Hase_large"/>
</dbReference>
<dbReference type="NCBIfam" id="TIGR01962">
    <property type="entry name" value="NuoD"/>
    <property type="match status" value="1"/>
</dbReference>
<dbReference type="NCBIfam" id="NF004739">
    <property type="entry name" value="PRK06075.1"/>
    <property type="match status" value="1"/>
</dbReference>
<dbReference type="PANTHER" id="PTHR11993:SF10">
    <property type="entry name" value="NADH DEHYDROGENASE [UBIQUINONE] IRON-SULFUR PROTEIN 2, MITOCHONDRIAL"/>
    <property type="match status" value="1"/>
</dbReference>
<dbReference type="PANTHER" id="PTHR11993">
    <property type="entry name" value="NADH-UBIQUINONE OXIDOREDUCTASE 49 KDA SUBUNIT"/>
    <property type="match status" value="1"/>
</dbReference>
<dbReference type="Pfam" id="PF00346">
    <property type="entry name" value="Complex1_49kDa"/>
    <property type="match status" value="1"/>
</dbReference>
<dbReference type="SUPFAM" id="SSF56762">
    <property type="entry name" value="HydB/Nqo4-like"/>
    <property type="match status" value="1"/>
</dbReference>
<dbReference type="PROSITE" id="PS00535">
    <property type="entry name" value="COMPLEX1_49K"/>
    <property type="match status" value="1"/>
</dbReference>
<keyword id="KW-0997">Cell inner membrane</keyword>
<keyword id="KW-1003">Cell membrane</keyword>
<keyword id="KW-0472">Membrane</keyword>
<keyword id="KW-0520">NAD</keyword>
<keyword id="KW-0874">Quinone</keyword>
<keyword id="KW-1278">Translocase</keyword>
<keyword id="KW-0813">Transport</keyword>
<keyword id="KW-0830">Ubiquinone</keyword>
<evidence type="ECO:0000255" key="1">
    <source>
        <dbReference type="HAMAP-Rule" id="MF_01358"/>
    </source>
</evidence>
<proteinExistence type="inferred from homology"/>
<reference key="1">
    <citation type="journal article" date="2005" name="J. Bacteriol.">
        <title>Completion of the genome sequence of Brucella abortus and comparison to the highly similar genomes of Brucella melitensis and Brucella suis.</title>
        <authorList>
            <person name="Halling S.M."/>
            <person name="Peterson-Burch B.D."/>
            <person name="Bricker B.J."/>
            <person name="Zuerner R.L."/>
            <person name="Qing Z."/>
            <person name="Li L.-L."/>
            <person name="Kapur V."/>
            <person name="Alt D.P."/>
            <person name="Olsen S.C."/>
        </authorList>
    </citation>
    <scope>NUCLEOTIDE SEQUENCE [LARGE SCALE GENOMIC DNA]</scope>
    <source>
        <strain>9-941</strain>
    </source>
</reference>
<name>NUOD_BRUAB</name>
<protein>
    <recommendedName>
        <fullName evidence="1">NADH-quinone oxidoreductase subunit D</fullName>
        <ecNumber evidence="1">7.1.1.-</ecNumber>
    </recommendedName>
    <alternativeName>
        <fullName evidence="1">NADH dehydrogenase I subunit D</fullName>
    </alternativeName>
    <alternativeName>
        <fullName evidence="1">NDH-1 subunit D</fullName>
    </alternativeName>
</protein>
<organism>
    <name type="scientific">Brucella abortus biovar 1 (strain 9-941)</name>
    <dbReference type="NCBI Taxonomy" id="262698"/>
    <lineage>
        <taxon>Bacteria</taxon>
        <taxon>Pseudomonadati</taxon>
        <taxon>Pseudomonadota</taxon>
        <taxon>Alphaproteobacteria</taxon>
        <taxon>Hyphomicrobiales</taxon>
        <taxon>Brucellaceae</taxon>
        <taxon>Brucella/Ochrobactrum group</taxon>
        <taxon>Brucella</taxon>
    </lineage>
</organism>
<sequence length="396" mass="45027">MAETQVRNFNINFGPQHPAAHGVLRLVLELDGEVVERVDPHIGLLHRGTEKLMEAKTYLQAVPYLDRLDYVAPMNQEHAYALAVERLLDIEVPKRGQLIRVLYSEIGRILNHLLNVTTQAMDVGALTPPLWGFEEREKLMVFYERACGARMHAAYFRPGGVHQDLPDQLIEDIGKWIDPFFTTLKNLDDLITPNRIFKQRNVDIGVVKLEDAWAWGFSGVMVRGSGAAWDLRKSQPYECYSEMEFDIPVGKNGDCYDRYLIRMEEMRQSARIMRQCVDLLLGKERVGPVSNTDHKIVPPKRGEMKRSMEALIHHFKLYTEGYHVPAGEVYAAVEAPKGEFGVYLVSDGSNKPYRFKLRAPGFAHLQAMDFLCRGHMLADVSAILGSLDIVFGEVDR</sequence>
<feature type="chain" id="PRO_0000357782" description="NADH-quinone oxidoreductase subunit D">
    <location>
        <begin position="1"/>
        <end position="396"/>
    </location>
</feature>
<accession>Q57DU8</accession>
<gene>
    <name evidence="1" type="primary">nuoD</name>
    <name type="ordered locus">BruAb1_0819</name>
</gene>
<comment type="function">
    <text evidence="1">NDH-1 shuttles electrons from NADH, via FMN and iron-sulfur (Fe-S) centers, to quinones in the respiratory chain. The immediate electron acceptor for the enzyme in this species is believed to be ubiquinone. Couples the redox reaction to proton translocation (for every two electrons transferred, four hydrogen ions are translocated across the cytoplasmic membrane), and thus conserves the redox energy in a proton gradient.</text>
</comment>
<comment type="catalytic activity">
    <reaction evidence="1">
        <text>a quinone + NADH + 5 H(+)(in) = a quinol + NAD(+) + 4 H(+)(out)</text>
        <dbReference type="Rhea" id="RHEA:57888"/>
        <dbReference type="ChEBI" id="CHEBI:15378"/>
        <dbReference type="ChEBI" id="CHEBI:24646"/>
        <dbReference type="ChEBI" id="CHEBI:57540"/>
        <dbReference type="ChEBI" id="CHEBI:57945"/>
        <dbReference type="ChEBI" id="CHEBI:132124"/>
    </reaction>
</comment>
<comment type="subunit">
    <text evidence="1">NDH-1 is composed of 14 different subunits. Subunits NuoB, C, D, E, F, and G constitute the peripheral sector of the complex.</text>
</comment>
<comment type="subcellular location">
    <subcellularLocation>
        <location evidence="1">Cell inner membrane</location>
        <topology evidence="1">Peripheral membrane protein</topology>
        <orientation evidence="1">Cytoplasmic side</orientation>
    </subcellularLocation>
</comment>
<comment type="similarity">
    <text evidence="1">Belongs to the complex I 49 kDa subunit family.</text>
</comment>